<sequence length="130" mass="13840">MPKQVIIPPGTTTPIAPFVPGTLADGVVYVSGTLPFDKQNNVVHIGDPKAQTRHVLETIKSVIETAGGSMADVTFNSIFITDWTNYAAINEVYAEFFPGDKPARFCIQCGLVKPDALVEIASVAHIGAPT</sequence>
<reference key="1">
    <citation type="journal article" date="2008" name="PLoS Genet.">
        <title>Complete genome sequence of the N2-fixing broad host range endophyte Klebsiella pneumoniae 342 and virulence predictions verified in mice.</title>
        <authorList>
            <person name="Fouts D.E."/>
            <person name="Tyler H.L."/>
            <person name="DeBoy R.T."/>
            <person name="Daugherty S."/>
            <person name="Ren Q."/>
            <person name="Badger J.H."/>
            <person name="Durkin A.S."/>
            <person name="Huot H."/>
            <person name="Shrivastava S."/>
            <person name="Kothari S."/>
            <person name="Dodson R.J."/>
            <person name="Mohamoud Y."/>
            <person name="Khouri H."/>
            <person name="Roesch L.F.W."/>
            <person name="Krogfelt K.A."/>
            <person name="Struve C."/>
            <person name="Triplett E.W."/>
            <person name="Methe B.A."/>
        </authorList>
    </citation>
    <scope>NUCLEOTIDE SEQUENCE [LARGE SCALE GENOMIC DNA]</scope>
    <source>
        <strain>342</strain>
    </source>
</reference>
<dbReference type="EC" id="3.5.-.-" evidence="1"/>
<dbReference type="EMBL" id="CP000964">
    <property type="protein sequence ID" value="ACI11115.1"/>
    <property type="molecule type" value="Genomic_DNA"/>
</dbReference>
<dbReference type="SMR" id="B5XXN2"/>
<dbReference type="KEGG" id="kpe:KPK_3522"/>
<dbReference type="HOGENOM" id="CLU_100715_7_3_6"/>
<dbReference type="Proteomes" id="UP000001734">
    <property type="component" value="Chromosome"/>
</dbReference>
<dbReference type="GO" id="GO:0005829">
    <property type="term" value="C:cytosol"/>
    <property type="evidence" value="ECO:0007669"/>
    <property type="project" value="TreeGrafter"/>
</dbReference>
<dbReference type="GO" id="GO:0019239">
    <property type="term" value="F:deaminase activity"/>
    <property type="evidence" value="ECO:0007669"/>
    <property type="project" value="TreeGrafter"/>
</dbReference>
<dbReference type="GO" id="GO:0019740">
    <property type="term" value="P:nitrogen utilization"/>
    <property type="evidence" value="ECO:0007669"/>
    <property type="project" value="UniProtKB-UniRule"/>
</dbReference>
<dbReference type="GO" id="GO:0006212">
    <property type="term" value="P:uracil catabolic process"/>
    <property type="evidence" value="ECO:0007669"/>
    <property type="project" value="UniProtKB-UniRule"/>
</dbReference>
<dbReference type="CDD" id="cd00448">
    <property type="entry name" value="YjgF_YER057c_UK114_family"/>
    <property type="match status" value="1"/>
</dbReference>
<dbReference type="Gene3D" id="3.30.1330.40">
    <property type="entry name" value="RutC-like"/>
    <property type="match status" value="1"/>
</dbReference>
<dbReference type="HAMAP" id="MF_00831">
    <property type="entry name" value="RutC"/>
    <property type="match status" value="1"/>
</dbReference>
<dbReference type="InterPro" id="IPR019897">
    <property type="entry name" value="RidA_CS"/>
</dbReference>
<dbReference type="InterPro" id="IPR019898">
    <property type="entry name" value="RutC"/>
</dbReference>
<dbReference type="InterPro" id="IPR035959">
    <property type="entry name" value="RutC-like_sf"/>
</dbReference>
<dbReference type="InterPro" id="IPR006175">
    <property type="entry name" value="YjgF/YER057c/UK114"/>
</dbReference>
<dbReference type="NCBIfam" id="TIGR03610">
    <property type="entry name" value="RutC"/>
    <property type="match status" value="1"/>
</dbReference>
<dbReference type="PANTHER" id="PTHR11803">
    <property type="entry name" value="2-IMINOBUTANOATE/2-IMINOPROPANOATE DEAMINASE RIDA"/>
    <property type="match status" value="1"/>
</dbReference>
<dbReference type="PANTHER" id="PTHR11803:SF58">
    <property type="entry name" value="PROTEIN HMF1-RELATED"/>
    <property type="match status" value="1"/>
</dbReference>
<dbReference type="Pfam" id="PF01042">
    <property type="entry name" value="Ribonuc_L-PSP"/>
    <property type="match status" value="1"/>
</dbReference>
<dbReference type="SUPFAM" id="SSF55298">
    <property type="entry name" value="YjgF-like"/>
    <property type="match status" value="1"/>
</dbReference>
<dbReference type="PROSITE" id="PS01094">
    <property type="entry name" value="UPF0076"/>
    <property type="match status" value="1"/>
</dbReference>
<evidence type="ECO:0000255" key="1">
    <source>
        <dbReference type="HAMAP-Rule" id="MF_00831"/>
    </source>
</evidence>
<keyword id="KW-0378">Hydrolase</keyword>
<comment type="function">
    <text evidence="1">Involved in pyrimidine catabolism. Catalyzes the deamination of 3-aminoacrylate to malonic semialdehyde, a reaction that can also occur spontaneously. RutC may facilitate the reaction and modulate the metabolic fitness, rather than catalyzing essential functions.</text>
</comment>
<comment type="catalytic activity">
    <reaction evidence="1">
        <text>(Z)-3-aminoacrylate + H2O + H(+) = 3-oxopropanoate + NH4(+)</text>
        <dbReference type="Rhea" id="RHEA:34947"/>
        <dbReference type="ChEBI" id="CHEBI:15377"/>
        <dbReference type="ChEBI" id="CHEBI:15378"/>
        <dbReference type="ChEBI" id="CHEBI:28938"/>
        <dbReference type="ChEBI" id="CHEBI:33190"/>
        <dbReference type="ChEBI" id="CHEBI:59894"/>
    </reaction>
</comment>
<comment type="similarity">
    <text evidence="1">Belongs to the RutC family.</text>
</comment>
<gene>
    <name evidence="1" type="primary">rutC</name>
    <name type="ordered locus">KPK_3522</name>
</gene>
<accession>B5XXN2</accession>
<proteinExistence type="inferred from homology"/>
<protein>
    <recommendedName>
        <fullName evidence="1">3-aminoacrylate deaminase RutC</fullName>
        <shortName evidence="1">3-AA deaminase</shortName>
        <ecNumber evidence="1">3.5.-.-</ecNumber>
    </recommendedName>
</protein>
<name>RUTC_KLEP3</name>
<feature type="chain" id="PRO_0000402751" description="3-aminoacrylate deaminase RutC">
    <location>
        <begin position="1"/>
        <end position="130"/>
    </location>
</feature>
<organism>
    <name type="scientific">Klebsiella pneumoniae (strain 342)</name>
    <dbReference type="NCBI Taxonomy" id="507522"/>
    <lineage>
        <taxon>Bacteria</taxon>
        <taxon>Pseudomonadati</taxon>
        <taxon>Pseudomonadota</taxon>
        <taxon>Gammaproteobacteria</taxon>
        <taxon>Enterobacterales</taxon>
        <taxon>Enterobacteriaceae</taxon>
        <taxon>Klebsiella/Raoultella group</taxon>
        <taxon>Klebsiella</taxon>
        <taxon>Klebsiella pneumoniae complex</taxon>
    </lineage>
</organism>